<name>LEU1_BUCUN</name>
<reference key="1">
    <citation type="journal article" date="2001" name="J. Bacteriol.">
        <title>Vertical transmission of biosynthetic plasmids in aphid endosymbionts (Buchnera).</title>
        <authorList>
            <person name="Wernegreen J.J."/>
            <person name="Moran N.A."/>
        </authorList>
    </citation>
    <scope>NUCLEOTIDE SEQUENCE [GENOMIC DNA]</scope>
</reference>
<feature type="chain" id="PRO_0000140345" description="2-isopropylmalate synthase">
    <location>
        <begin position="1" status="less than"/>
        <end position="502"/>
    </location>
</feature>
<feature type="domain" description="Pyruvate carboxyltransferase" evidence="1">
    <location>
        <begin position="1"/>
        <end position="254"/>
    </location>
</feature>
<feature type="region of interest" description="Regulatory domain" evidence="1">
    <location>
        <begin position="379"/>
        <end position="502"/>
    </location>
</feature>
<feature type="binding site" evidence="1">
    <location>
        <position position="1"/>
    </location>
    <ligand>
        <name>Mn(2+)</name>
        <dbReference type="ChEBI" id="CHEBI:29035"/>
    </ligand>
</feature>
<feature type="binding site" evidence="1">
    <location>
        <position position="189"/>
    </location>
    <ligand>
        <name>Mn(2+)</name>
        <dbReference type="ChEBI" id="CHEBI:29035"/>
    </ligand>
</feature>
<feature type="binding site" evidence="1">
    <location>
        <position position="191"/>
    </location>
    <ligand>
        <name>Mn(2+)</name>
        <dbReference type="ChEBI" id="CHEBI:29035"/>
    </ligand>
</feature>
<feature type="binding site" evidence="1">
    <location>
        <position position="225"/>
    </location>
    <ligand>
        <name>Mn(2+)</name>
        <dbReference type="ChEBI" id="CHEBI:29035"/>
    </ligand>
</feature>
<feature type="non-terminal residue">
    <location>
        <position position="1"/>
    </location>
</feature>
<dbReference type="EC" id="2.3.3.13" evidence="1"/>
<dbReference type="EMBL" id="AF197448">
    <property type="protein sequence ID" value="AAG31377.1"/>
    <property type="molecule type" value="Genomic_DNA"/>
</dbReference>
<dbReference type="UniPathway" id="UPA00048">
    <property type="reaction ID" value="UER00070"/>
</dbReference>
<dbReference type="GO" id="GO:0005829">
    <property type="term" value="C:cytosol"/>
    <property type="evidence" value="ECO:0007669"/>
    <property type="project" value="TreeGrafter"/>
</dbReference>
<dbReference type="GO" id="GO:0003852">
    <property type="term" value="F:2-isopropylmalate synthase activity"/>
    <property type="evidence" value="ECO:0007669"/>
    <property type="project" value="UniProtKB-EC"/>
</dbReference>
<dbReference type="GO" id="GO:0046872">
    <property type="term" value="F:metal ion binding"/>
    <property type="evidence" value="ECO:0007669"/>
    <property type="project" value="UniProtKB-KW"/>
</dbReference>
<dbReference type="GO" id="GO:0009098">
    <property type="term" value="P:L-leucine biosynthetic process"/>
    <property type="evidence" value="ECO:0007669"/>
    <property type="project" value="UniProtKB-UniPathway"/>
</dbReference>
<dbReference type="CDD" id="cd07940">
    <property type="entry name" value="DRE_TIM_IPMS"/>
    <property type="match status" value="1"/>
</dbReference>
<dbReference type="FunFam" id="1.10.238.260:FF:000001">
    <property type="entry name" value="2-isopropylmalate synthase"/>
    <property type="match status" value="1"/>
</dbReference>
<dbReference type="FunFam" id="3.20.20.70:FF:000010">
    <property type="entry name" value="2-isopropylmalate synthase"/>
    <property type="match status" value="1"/>
</dbReference>
<dbReference type="FunFam" id="3.30.160.270:FF:000001">
    <property type="entry name" value="2-isopropylmalate synthase"/>
    <property type="match status" value="1"/>
</dbReference>
<dbReference type="Gene3D" id="1.10.238.260">
    <property type="match status" value="1"/>
</dbReference>
<dbReference type="Gene3D" id="3.30.160.270">
    <property type="match status" value="1"/>
</dbReference>
<dbReference type="Gene3D" id="3.20.20.70">
    <property type="entry name" value="Aldolase class I"/>
    <property type="match status" value="1"/>
</dbReference>
<dbReference type="HAMAP" id="MF_01025">
    <property type="entry name" value="LeuA_type1"/>
    <property type="match status" value="1"/>
</dbReference>
<dbReference type="InterPro" id="IPR050073">
    <property type="entry name" value="2-IPM_HCS-like"/>
</dbReference>
<dbReference type="InterPro" id="IPR013709">
    <property type="entry name" value="2-isopropylmalate_synth_dimer"/>
</dbReference>
<dbReference type="InterPro" id="IPR002034">
    <property type="entry name" value="AIPM/Hcit_synth_CS"/>
</dbReference>
<dbReference type="InterPro" id="IPR013785">
    <property type="entry name" value="Aldolase_TIM"/>
</dbReference>
<dbReference type="InterPro" id="IPR054691">
    <property type="entry name" value="LeuA/HCS_post-cat"/>
</dbReference>
<dbReference type="InterPro" id="IPR036230">
    <property type="entry name" value="LeuA_allosteric_dom_sf"/>
</dbReference>
<dbReference type="InterPro" id="IPR005671">
    <property type="entry name" value="LeuA_bact_synth"/>
</dbReference>
<dbReference type="InterPro" id="IPR000891">
    <property type="entry name" value="PYR_CT"/>
</dbReference>
<dbReference type="NCBIfam" id="TIGR00973">
    <property type="entry name" value="leuA_bact"/>
    <property type="match status" value="1"/>
</dbReference>
<dbReference type="NCBIfam" id="NF002084">
    <property type="entry name" value="PRK00915.1-1"/>
    <property type="match status" value="1"/>
</dbReference>
<dbReference type="NCBIfam" id="NF002086">
    <property type="entry name" value="PRK00915.1-3"/>
    <property type="match status" value="1"/>
</dbReference>
<dbReference type="PANTHER" id="PTHR10277:SF9">
    <property type="entry name" value="2-ISOPROPYLMALATE SYNTHASE 1, CHLOROPLASTIC-RELATED"/>
    <property type="match status" value="1"/>
</dbReference>
<dbReference type="PANTHER" id="PTHR10277">
    <property type="entry name" value="HOMOCITRATE SYNTHASE-RELATED"/>
    <property type="match status" value="1"/>
</dbReference>
<dbReference type="Pfam" id="PF22617">
    <property type="entry name" value="HCS_D2"/>
    <property type="match status" value="1"/>
</dbReference>
<dbReference type="Pfam" id="PF00682">
    <property type="entry name" value="HMGL-like"/>
    <property type="match status" value="1"/>
</dbReference>
<dbReference type="Pfam" id="PF08502">
    <property type="entry name" value="LeuA_dimer"/>
    <property type="match status" value="1"/>
</dbReference>
<dbReference type="SMART" id="SM00917">
    <property type="entry name" value="LeuA_dimer"/>
    <property type="match status" value="1"/>
</dbReference>
<dbReference type="SUPFAM" id="SSF110921">
    <property type="entry name" value="2-isopropylmalate synthase LeuA, allosteric (dimerisation) domain"/>
    <property type="match status" value="1"/>
</dbReference>
<dbReference type="SUPFAM" id="SSF51569">
    <property type="entry name" value="Aldolase"/>
    <property type="match status" value="1"/>
</dbReference>
<dbReference type="PROSITE" id="PS00816">
    <property type="entry name" value="AIPM_HOMOCIT_SYNTH_2"/>
    <property type="match status" value="1"/>
</dbReference>
<dbReference type="PROSITE" id="PS50991">
    <property type="entry name" value="PYR_CT"/>
    <property type="match status" value="1"/>
</dbReference>
<gene>
    <name evidence="1" type="primary">leuA</name>
</gene>
<sequence>DGEQALQASLSVKEKLQIALCLEKAGVDIMEVGFPISSPGDFKSVQTISQNIKNSRICSLARCIEKDIDTAGEAMSHCDFFRIHVFLATSTLHMESKLRKNFDEIIDMAIFSVKRALRYTDDVEFSCEDASRTTMDNLCRIVEKLISCGVKTINIPDTVGYTIPNELSLIIKNLFERVPNIHKSTISVHCHNDLGMAVGNSISAIQAGARQIEGTINGIGERAGNTALEEVIMAIKVREDILGLSTNINHKEIYRTSQVISRICNMPIPSNKAIVGSNAFSHSSGIHQDGVLKNRENYEIMDPSSIGLKKVKLNLTSRSGRAAVKYYMNEMGYKDSDYNIDELYVDFLKLADKKGQVFDYDLEALAFINKKQDELEHFCLKFFSVQSISNNLSTASVTLLCGDKIYTESSTTSNGPVXAIYQALNRITHFPIILQKFQLIAKGQGKDALGQVDILVKYKKRQFHGVGLATDIIESSAQAMINVLNNIWKVKQVNKNLKNLKK</sequence>
<protein>
    <recommendedName>
        <fullName evidence="1">2-isopropylmalate synthase</fullName>
        <ecNumber evidence="1">2.3.3.13</ecNumber>
    </recommendedName>
    <alternativeName>
        <fullName evidence="1">Alpha-IPM synthase</fullName>
    </alternativeName>
    <alternativeName>
        <fullName evidence="1">Alpha-isopropylmalate synthase</fullName>
    </alternativeName>
</protein>
<geneLocation type="plasmid">
    <name>pLeu</name>
    <name>pBAp1</name>
</geneLocation>
<accession>Q9EVI8</accession>
<organism>
    <name type="scientific">Buchnera aphidicola subsp. Uroleucon sonchi</name>
    <dbReference type="NCBI Taxonomy" id="118118"/>
    <lineage>
        <taxon>Bacteria</taxon>
        <taxon>Pseudomonadati</taxon>
        <taxon>Pseudomonadota</taxon>
        <taxon>Gammaproteobacteria</taxon>
        <taxon>Enterobacterales</taxon>
        <taxon>Erwiniaceae</taxon>
        <taxon>Buchnera</taxon>
    </lineage>
</organism>
<evidence type="ECO:0000255" key="1">
    <source>
        <dbReference type="HAMAP-Rule" id="MF_01025"/>
    </source>
</evidence>
<evidence type="ECO:0000305" key="2"/>
<proteinExistence type="inferred from homology"/>
<comment type="function">
    <text evidence="1">Catalyzes the condensation of the acetyl group of acetyl-CoA with 3-methyl-2-oxobutanoate (2-ketoisovalerate) to form 3-carboxy-3-hydroxy-4-methylpentanoate (2-isopropylmalate).</text>
</comment>
<comment type="catalytic activity">
    <reaction evidence="1">
        <text>3-methyl-2-oxobutanoate + acetyl-CoA + H2O = (2S)-2-isopropylmalate + CoA + H(+)</text>
        <dbReference type="Rhea" id="RHEA:21524"/>
        <dbReference type="ChEBI" id="CHEBI:1178"/>
        <dbReference type="ChEBI" id="CHEBI:11851"/>
        <dbReference type="ChEBI" id="CHEBI:15377"/>
        <dbReference type="ChEBI" id="CHEBI:15378"/>
        <dbReference type="ChEBI" id="CHEBI:57287"/>
        <dbReference type="ChEBI" id="CHEBI:57288"/>
        <dbReference type="EC" id="2.3.3.13"/>
    </reaction>
</comment>
<comment type="cofactor">
    <cofactor evidence="1">
        <name>Mn(2+)</name>
        <dbReference type="ChEBI" id="CHEBI:29035"/>
    </cofactor>
</comment>
<comment type="pathway">
    <text evidence="1">Amino-acid biosynthesis; L-leucine biosynthesis; L-leucine from 3-methyl-2-oxobutanoate: step 1/4.</text>
</comment>
<comment type="subunit">
    <text evidence="1">Homodimer.</text>
</comment>
<comment type="subcellular location">
    <subcellularLocation>
        <location evidence="1">Cytoplasm</location>
    </subcellularLocation>
</comment>
<comment type="similarity">
    <text evidence="1 2">Belongs to the alpha-IPM synthase/homocitrate synthase family. LeuA type 1 subfamily.</text>
</comment>
<keyword id="KW-0028">Amino-acid biosynthesis</keyword>
<keyword id="KW-0100">Branched-chain amino acid biosynthesis</keyword>
<keyword id="KW-0963">Cytoplasm</keyword>
<keyword id="KW-0432">Leucine biosynthesis</keyword>
<keyword id="KW-0464">Manganese</keyword>
<keyword id="KW-0479">Metal-binding</keyword>
<keyword id="KW-0614">Plasmid</keyword>
<keyword id="KW-0808">Transferase</keyword>